<evidence type="ECO:0000255" key="1">
    <source>
        <dbReference type="HAMAP-Rule" id="MF_00439"/>
    </source>
</evidence>
<gene>
    <name evidence="1" type="primary">ycf3</name>
</gene>
<geneLocation type="chloroplast"/>
<keyword id="KW-0150">Chloroplast</keyword>
<keyword id="KW-0472">Membrane</keyword>
<keyword id="KW-0602">Photosynthesis</keyword>
<keyword id="KW-0934">Plastid</keyword>
<keyword id="KW-1185">Reference proteome</keyword>
<keyword id="KW-0677">Repeat</keyword>
<keyword id="KW-0793">Thylakoid</keyword>
<keyword id="KW-0802">TPR repeat</keyword>
<proteinExistence type="inferred from homology"/>
<dbReference type="EMBL" id="EF044213">
    <property type="protein sequence ID" value="ABJ89680.1"/>
    <property type="molecule type" value="Genomic_DNA"/>
</dbReference>
<dbReference type="RefSeq" id="YP_817483.1">
    <property type="nucleotide sequence ID" value="NC_008535.1"/>
</dbReference>
<dbReference type="SMR" id="A0A336"/>
<dbReference type="GeneID" id="4421877"/>
<dbReference type="OrthoDB" id="431027at2759"/>
<dbReference type="Proteomes" id="UP000515148">
    <property type="component" value="Chloroplast Pltd"/>
</dbReference>
<dbReference type="GO" id="GO:0009535">
    <property type="term" value="C:chloroplast thylakoid membrane"/>
    <property type="evidence" value="ECO:0007669"/>
    <property type="project" value="UniProtKB-SubCell"/>
</dbReference>
<dbReference type="GO" id="GO:0015979">
    <property type="term" value="P:photosynthesis"/>
    <property type="evidence" value="ECO:0007669"/>
    <property type="project" value="UniProtKB-UniRule"/>
</dbReference>
<dbReference type="FunFam" id="1.25.40.10:FF:000004">
    <property type="entry name" value="Photosystem I assembly protein Ycf3"/>
    <property type="match status" value="1"/>
</dbReference>
<dbReference type="Gene3D" id="1.25.40.10">
    <property type="entry name" value="Tetratricopeptide repeat domain"/>
    <property type="match status" value="1"/>
</dbReference>
<dbReference type="HAMAP" id="MF_00439">
    <property type="entry name" value="Ycf3"/>
    <property type="match status" value="1"/>
</dbReference>
<dbReference type="InterPro" id="IPR022818">
    <property type="entry name" value="PSI_Ycf3_assembly"/>
</dbReference>
<dbReference type="InterPro" id="IPR011990">
    <property type="entry name" value="TPR-like_helical_dom_sf"/>
</dbReference>
<dbReference type="InterPro" id="IPR019734">
    <property type="entry name" value="TPR_rpt"/>
</dbReference>
<dbReference type="InterPro" id="IPR051685">
    <property type="entry name" value="Ycf3/AcsC/BcsC/TPR_MFPF"/>
</dbReference>
<dbReference type="NCBIfam" id="NF002725">
    <property type="entry name" value="PRK02603.1"/>
    <property type="match status" value="1"/>
</dbReference>
<dbReference type="PANTHER" id="PTHR44943">
    <property type="entry name" value="CELLULOSE SYNTHASE OPERON PROTEIN C"/>
    <property type="match status" value="1"/>
</dbReference>
<dbReference type="PANTHER" id="PTHR44943:SF8">
    <property type="entry name" value="TPR REPEAT-CONTAINING PROTEIN MJ0263"/>
    <property type="match status" value="1"/>
</dbReference>
<dbReference type="Pfam" id="PF00515">
    <property type="entry name" value="TPR_1"/>
    <property type="match status" value="1"/>
</dbReference>
<dbReference type="SMART" id="SM00028">
    <property type="entry name" value="TPR"/>
    <property type="match status" value="3"/>
</dbReference>
<dbReference type="SUPFAM" id="SSF48452">
    <property type="entry name" value="TPR-like"/>
    <property type="match status" value="1"/>
</dbReference>
<dbReference type="PROSITE" id="PS50005">
    <property type="entry name" value="TPR"/>
    <property type="match status" value="3"/>
</dbReference>
<dbReference type="PROSITE" id="PS50293">
    <property type="entry name" value="TPR_REGION"/>
    <property type="match status" value="2"/>
</dbReference>
<accession>A0A336</accession>
<comment type="function">
    <text evidence="1">Essential for the assembly of the photosystem I (PSI) complex. May act as a chaperone-like factor to guide the assembly of the PSI subunits.</text>
</comment>
<comment type="subcellular location">
    <subcellularLocation>
        <location evidence="1">Plastid</location>
        <location evidence="1">Chloroplast thylakoid membrane</location>
        <topology evidence="1">Peripheral membrane protein</topology>
    </subcellularLocation>
</comment>
<comment type="similarity">
    <text evidence="1">Belongs to the Ycf3 family.</text>
</comment>
<feature type="chain" id="PRO_0000275613" description="Photosystem I assembly protein Ycf3">
    <location>
        <begin position="1"/>
        <end position="168"/>
    </location>
</feature>
<feature type="repeat" description="TPR 1">
    <location>
        <begin position="35"/>
        <end position="68"/>
    </location>
</feature>
<feature type="repeat" description="TPR 2">
    <location>
        <begin position="72"/>
        <end position="105"/>
    </location>
</feature>
<feature type="repeat" description="TPR 3">
    <location>
        <begin position="120"/>
        <end position="153"/>
    </location>
</feature>
<protein>
    <recommendedName>
        <fullName evidence="1">Photosystem I assembly protein Ycf3</fullName>
    </recommendedName>
</protein>
<sequence length="168" mass="19440">MPRSQINGNFIDKTFSIVANILLRIIPTTSGEREAFTYYRDGMSAQSEGNYAEALQNYYEAMRLEIDPYDRSYILYNIGLIHTSNGEHTKALEYYFRALERNPFLPQAFNNMAVICHYRGEQAIRQGDSEIAEAWFDQAAEYWKQAISLTPGNYIEAHNWLKITGRFG</sequence>
<name>YCF3_COFAR</name>
<organism>
    <name type="scientific">Coffea arabica</name>
    <name type="common">Arabian coffee</name>
    <dbReference type="NCBI Taxonomy" id="13443"/>
    <lineage>
        <taxon>Eukaryota</taxon>
        <taxon>Viridiplantae</taxon>
        <taxon>Streptophyta</taxon>
        <taxon>Embryophyta</taxon>
        <taxon>Tracheophyta</taxon>
        <taxon>Spermatophyta</taxon>
        <taxon>Magnoliopsida</taxon>
        <taxon>eudicotyledons</taxon>
        <taxon>Gunneridae</taxon>
        <taxon>Pentapetalae</taxon>
        <taxon>asterids</taxon>
        <taxon>lamiids</taxon>
        <taxon>Gentianales</taxon>
        <taxon>Rubiaceae</taxon>
        <taxon>Ixoroideae</taxon>
        <taxon>Gardenieae complex</taxon>
        <taxon>Bertiereae - Coffeeae clade</taxon>
        <taxon>Coffeeae</taxon>
        <taxon>Coffea</taxon>
    </lineage>
</organism>
<reference key="1">
    <citation type="journal article" date="2007" name="Plant Biotechnol. J.">
        <title>The complete nucleotide sequence of the coffee (Coffea arabica L.) chloroplast genome: organization and implications for biotechnology and phylogenetic relationships amongst angiosperms.</title>
        <authorList>
            <person name="Samson N."/>
            <person name="Bausher M.G."/>
            <person name="Lee S.-B."/>
            <person name="Jansen R.K."/>
            <person name="Daniell H."/>
        </authorList>
    </citation>
    <scope>NUCLEOTIDE SEQUENCE [LARGE SCALE GENOMIC DNA]</scope>
</reference>